<reference key="1">
    <citation type="journal article" date="1994" name="J. Biol. Chem.">
        <title>Precursors of vertebrate peptide antibiotics dermaseptin b and adenoregulin have extensive sequence identities with precursors of opioid peptides dermorphin, dermenkephalin, and deltorphins.</title>
        <authorList>
            <person name="Amiche M."/>
            <person name="Ducancel F."/>
            <person name="Mor A."/>
            <person name="Boulain J.-C."/>
            <person name="Menez A."/>
            <person name="Nicolas P."/>
        </authorList>
    </citation>
    <scope>NUCLEOTIDE SEQUENCE [MRNA]</scope>
    <scope>AMIDATION AT GLN-75</scope>
    <source>
        <tissue>Skin</tissue>
    </source>
</reference>
<reference key="2">
    <citation type="journal article" date="1994" name="Eur. J. Biochem.">
        <title>Isolation and structure of novel defensive peptides from frog skin.</title>
        <authorList>
            <person name="Mor A."/>
            <person name="Nicolas P."/>
        </authorList>
    </citation>
    <scope>PROTEIN SEQUENCE OF 45-75</scope>
    <scope>SUBCELLULAR LOCATION</scope>
    <source>
        <tissue>Skin secretion</tissue>
    </source>
</reference>
<reference key="3">
    <citation type="journal article" date="2008" name="Peptides">
        <title>A consistent nomenclature of antimicrobial peptides isolated from frogs of the subfamily Phyllomedusinae.</title>
        <authorList>
            <person name="Amiche M."/>
            <person name="Ladram A."/>
            <person name="Nicolas P."/>
        </authorList>
    </citation>
    <scope>NOMENCLATURE</scope>
</reference>
<sequence>MDILKKSLFLVLFLGLVSLSICEEEKRENEDEEKQDDEQSEMKRAMWKDVLKKIGTVALHAGKAALGAVADTISQGEQ</sequence>
<name>DRS1_PHYBI</name>
<organism>
    <name type="scientific">Phyllomedusa bicolor</name>
    <name type="common">Two-colored leaf frog</name>
    <name type="synonym">Rana bicolor</name>
    <dbReference type="NCBI Taxonomy" id="8393"/>
    <lineage>
        <taxon>Eukaryota</taxon>
        <taxon>Metazoa</taxon>
        <taxon>Chordata</taxon>
        <taxon>Craniata</taxon>
        <taxon>Vertebrata</taxon>
        <taxon>Euteleostomi</taxon>
        <taxon>Amphibia</taxon>
        <taxon>Batrachia</taxon>
        <taxon>Anura</taxon>
        <taxon>Neobatrachia</taxon>
        <taxon>Hyloidea</taxon>
        <taxon>Hylidae</taxon>
        <taxon>Phyllomedusinae</taxon>
        <taxon>Phyllomedusa</taxon>
    </lineage>
</organism>
<feature type="signal peptide" evidence="1">
    <location>
        <begin position="1"/>
        <end position="22"/>
    </location>
</feature>
<feature type="propeptide" id="PRO_0000007089" evidence="2">
    <location>
        <begin position="23"/>
        <end position="42"/>
    </location>
</feature>
<feature type="peptide" id="PRO_0000007090" description="Dermaseptin-B1" evidence="2">
    <location>
        <begin position="45"/>
        <end position="75"/>
    </location>
</feature>
<feature type="propeptide" id="PRO_0000007091" evidence="2">
    <location>
        <begin position="76"/>
        <end position="78"/>
    </location>
</feature>
<feature type="modified residue" description="Glutamine amide" evidence="5">
    <location>
        <position position="75"/>
    </location>
</feature>
<accession>P80282</accession>
<evidence type="ECO:0000255" key="1"/>
<evidence type="ECO:0000269" key="2">
    <source>
    </source>
</evidence>
<evidence type="ECO:0000303" key="3">
    <source>
    </source>
</evidence>
<evidence type="ECO:0000305" key="4"/>
<evidence type="ECO:0000305" key="5">
    <source>
    </source>
</evidence>
<evidence type="ECO:0000305" key="6">
    <source>
    </source>
</evidence>
<keyword id="KW-0027">Amidation</keyword>
<keyword id="KW-0878">Amphibian defense peptide</keyword>
<keyword id="KW-0044">Antibiotic</keyword>
<keyword id="KW-0929">Antimicrobial</keyword>
<keyword id="KW-0165">Cleavage on pair of basic residues</keyword>
<keyword id="KW-0903">Direct protein sequencing</keyword>
<keyword id="KW-0295">Fungicide</keyword>
<keyword id="KW-0964">Secreted</keyword>
<keyword id="KW-0732">Signal</keyword>
<protein>
    <recommendedName>
        <fullName evidence="3">Dermaseptin-B1</fullName>
        <shortName evidence="3">DRS-B1</shortName>
    </recommendedName>
    <alternativeName>
        <fullName>Dermaseptin BI</fullName>
    </alternativeName>
</protein>
<comment type="function">
    <text>Possesses a potent antimicrobial activity against bacteria, fungi and protozoa. Probably acts by disturbing membrane functions with its amphipathic structure.</text>
</comment>
<comment type="subcellular location">
    <subcellularLocation>
        <location evidence="2">Secreted</location>
    </subcellularLocation>
</comment>
<comment type="tissue specificity">
    <text evidence="6">Expressed by the skin glands.</text>
</comment>
<comment type="similarity">
    <text evidence="4">Belongs to the frog skin active peptide (FSAP) family. Dermaseptin subfamily.</text>
</comment>
<comment type="online information" name="The antimicrobial peptide database">
    <link uri="https://wangapd3.com/database/query_output.php?ID=0293"/>
</comment>
<proteinExistence type="evidence at protein level"/>
<dbReference type="EMBL" id="X72387">
    <property type="protein sequence ID" value="CAA51080.1"/>
    <property type="molecule type" value="mRNA"/>
</dbReference>
<dbReference type="PIR" id="A53727">
    <property type="entry name" value="A53727"/>
</dbReference>
<dbReference type="PIR" id="B54897">
    <property type="entry name" value="B54897"/>
</dbReference>
<dbReference type="TCDB" id="1.C.52.1.1">
    <property type="family name" value="the dermaseptin (dermaseptin) family"/>
</dbReference>
<dbReference type="GO" id="GO:0005576">
    <property type="term" value="C:extracellular region"/>
    <property type="evidence" value="ECO:0007669"/>
    <property type="project" value="UniProtKB-SubCell"/>
</dbReference>
<dbReference type="GO" id="GO:0042742">
    <property type="term" value="P:defense response to bacterium"/>
    <property type="evidence" value="ECO:0007669"/>
    <property type="project" value="UniProtKB-KW"/>
</dbReference>
<dbReference type="GO" id="GO:0050832">
    <property type="term" value="P:defense response to fungus"/>
    <property type="evidence" value="ECO:0007669"/>
    <property type="project" value="UniProtKB-KW"/>
</dbReference>
<dbReference type="GO" id="GO:0031640">
    <property type="term" value="P:killing of cells of another organism"/>
    <property type="evidence" value="ECO:0007669"/>
    <property type="project" value="UniProtKB-KW"/>
</dbReference>
<dbReference type="InterPro" id="IPR022731">
    <property type="entry name" value="Dermaseptin_dom"/>
</dbReference>
<dbReference type="InterPro" id="IPR004275">
    <property type="entry name" value="Frog_antimicrobial_propeptide"/>
</dbReference>
<dbReference type="InterPro" id="IPR016322">
    <property type="entry name" value="FSAP"/>
</dbReference>
<dbReference type="Pfam" id="PF12121">
    <property type="entry name" value="DD_K"/>
    <property type="match status" value="1"/>
</dbReference>
<dbReference type="Pfam" id="PF03032">
    <property type="entry name" value="FSAP_sig_propep"/>
    <property type="match status" value="1"/>
</dbReference>
<dbReference type="PIRSF" id="PIRSF001822">
    <property type="entry name" value="Dermaseptin_precursor"/>
    <property type="match status" value="1"/>
</dbReference>